<evidence type="ECO:0000255" key="1">
    <source>
        <dbReference type="HAMAP-Rule" id="MF_00195"/>
    </source>
</evidence>
<reference key="1">
    <citation type="submission" date="2009-07" db="EMBL/GenBank/DDBJ databases">
        <title>Complete sequence of Geobacter sp. M21.</title>
        <authorList>
            <consortium name="US DOE Joint Genome Institute"/>
            <person name="Lucas S."/>
            <person name="Copeland A."/>
            <person name="Lapidus A."/>
            <person name="Glavina del Rio T."/>
            <person name="Dalin E."/>
            <person name="Tice H."/>
            <person name="Bruce D."/>
            <person name="Goodwin L."/>
            <person name="Pitluck S."/>
            <person name="Saunders E."/>
            <person name="Brettin T."/>
            <person name="Detter J.C."/>
            <person name="Han C."/>
            <person name="Larimer F."/>
            <person name="Land M."/>
            <person name="Hauser L."/>
            <person name="Kyrpides N."/>
            <person name="Ovchinnikova G."/>
            <person name="Lovley D."/>
        </authorList>
    </citation>
    <scope>NUCLEOTIDE SEQUENCE [LARGE SCALE GENOMIC DNA]</scope>
    <source>
        <strain>M21</strain>
    </source>
</reference>
<feature type="chain" id="PRO_1000204040" description="GTPase Der">
    <location>
        <begin position="1"/>
        <end position="440"/>
    </location>
</feature>
<feature type="domain" description="EngA-type G 1">
    <location>
        <begin position="3"/>
        <end position="167"/>
    </location>
</feature>
<feature type="domain" description="EngA-type G 2">
    <location>
        <begin position="176"/>
        <end position="351"/>
    </location>
</feature>
<feature type="domain" description="KH-like" evidence="1">
    <location>
        <begin position="352"/>
        <end position="436"/>
    </location>
</feature>
<feature type="binding site" evidence="1">
    <location>
        <begin position="9"/>
        <end position="16"/>
    </location>
    <ligand>
        <name>GTP</name>
        <dbReference type="ChEBI" id="CHEBI:37565"/>
        <label>1</label>
    </ligand>
</feature>
<feature type="binding site" evidence="1">
    <location>
        <begin position="56"/>
        <end position="60"/>
    </location>
    <ligand>
        <name>GTP</name>
        <dbReference type="ChEBI" id="CHEBI:37565"/>
        <label>1</label>
    </ligand>
</feature>
<feature type="binding site" evidence="1">
    <location>
        <begin position="119"/>
        <end position="122"/>
    </location>
    <ligand>
        <name>GTP</name>
        <dbReference type="ChEBI" id="CHEBI:37565"/>
        <label>1</label>
    </ligand>
</feature>
<feature type="binding site" evidence="1">
    <location>
        <begin position="182"/>
        <end position="189"/>
    </location>
    <ligand>
        <name>GTP</name>
        <dbReference type="ChEBI" id="CHEBI:37565"/>
        <label>2</label>
    </ligand>
</feature>
<feature type="binding site" evidence="1">
    <location>
        <begin position="229"/>
        <end position="233"/>
    </location>
    <ligand>
        <name>GTP</name>
        <dbReference type="ChEBI" id="CHEBI:37565"/>
        <label>2</label>
    </ligand>
</feature>
<feature type="binding site" evidence="1">
    <location>
        <begin position="294"/>
        <end position="297"/>
    </location>
    <ligand>
        <name>GTP</name>
        <dbReference type="ChEBI" id="CHEBI:37565"/>
        <label>2</label>
    </ligand>
</feature>
<name>DER_GEOSM</name>
<keyword id="KW-0342">GTP-binding</keyword>
<keyword id="KW-0547">Nucleotide-binding</keyword>
<keyword id="KW-0677">Repeat</keyword>
<keyword id="KW-0690">Ribosome biogenesis</keyword>
<protein>
    <recommendedName>
        <fullName evidence="1">GTPase Der</fullName>
    </recommendedName>
    <alternativeName>
        <fullName evidence="1">GTP-binding protein EngA</fullName>
    </alternativeName>
</protein>
<gene>
    <name evidence="1" type="primary">der</name>
    <name type="synonym">engA</name>
    <name type="ordered locus">GM21_0752</name>
</gene>
<accession>C6E0Y6</accession>
<sequence>MKPIIAIVGRPNVGKSTLFNRLVGRRKAMVDDMPGVTRDRNYAEVNRFDVPFILVDTGGFEPETSDRLLQQMREQSRFAMDEADLILFVMDARGGLTPADRDVVDMLRRINKPVFYIINKVDGEKQEAEAGDFYSLGVDHIHTISAEHNRGVGDLMDEVLAAIPYDREKESDEEITRIAVVGRPNVGKSTLVNRLLGYERVVANPTAGTTRDAVDTRFTVNKKPYLLIDTAGIRRKGKTVQKVEKYSVMDALRSIERADVVLIVLNAEEGVTEQDSKIAGYAYEAGRGCIFVVNKWDTLAKDNSSIAKFTEEIRRNFKYLPFAPILFVSAETGQRTGKIIAEVDQVMEQYCKRVTTGELNRVFTQAVDENHAPLSAGRRVKFYFATQVAVKPPSFVVFTNCPEGIHFSYERYIMNRFREAFGFNGTPLKLIFRGRDKKDA</sequence>
<proteinExistence type="inferred from homology"/>
<dbReference type="EMBL" id="CP001661">
    <property type="protein sequence ID" value="ACT16826.1"/>
    <property type="molecule type" value="Genomic_DNA"/>
</dbReference>
<dbReference type="SMR" id="C6E0Y6"/>
<dbReference type="STRING" id="443144.GM21_0752"/>
<dbReference type="KEGG" id="gem:GM21_0752"/>
<dbReference type="eggNOG" id="COG1160">
    <property type="taxonomic scope" value="Bacteria"/>
</dbReference>
<dbReference type="HOGENOM" id="CLU_016077_6_2_7"/>
<dbReference type="OrthoDB" id="9805918at2"/>
<dbReference type="GO" id="GO:0005525">
    <property type="term" value="F:GTP binding"/>
    <property type="evidence" value="ECO:0007669"/>
    <property type="project" value="UniProtKB-UniRule"/>
</dbReference>
<dbReference type="GO" id="GO:0043022">
    <property type="term" value="F:ribosome binding"/>
    <property type="evidence" value="ECO:0007669"/>
    <property type="project" value="TreeGrafter"/>
</dbReference>
<dbReference type="GO" id="GO:0042254">
    <property type="term" value="P:ribosome biogenesis"/>
    <property type="evidence" value="ECO:0007669"/>
    <property type="project" value="UniProtKB-KW"/>
</dbReference>
<dbReference type="CDD" id="cd01894">
    <property type="entry name" value="EngA1"/>
    <property type="match status" value="1"/>
</dbReference>
<dbReference type="CDD" id="cd01895">
    <property type="entry name" value="EngA2"/>
    <property type="match status" value="1"/>
</dbReference>
<dbReference type="FunFam" id="3.30.300.20:FF:000004">
    <property type="entry name" value="GTPase Der"/>
    <property type="match status" value="1"/>
</dbReference>
<dbReference type="FunFam" id="3.40.50.300:FF:000040">
    <property type="entry name" value="GTPase Der"/>
    <property type="match status" value="1"/>
</dbReference>
<dbReference type="FunFam" id="3.40.50.300:FF:000057">
    <property type="entry name" value="GTPase Der"/>
    <property type="match status" value="1"/>
</dbReference>
<dbReference type="Gene3D" id="3.30.300.20">
    <property type="match status" value="1"/>
</dbReference>
<dbReference type="Gene3D" id="3.40.50.300">
    <property type="entry name" value="P-loop containing nucleotide triphosphate hydrolases"/>
    <property type="match status" value="2"/>
</dbReference>
<dbReference type="HAMAP" id="MF_00195">
    <property type="entry name" value="GTPase_Der"/>
    <property type="match status" value="1"/>
</dbReference>
<dbReference type="InterPro" id="IPR031166">
    <property type="entry name" value="G_ENGA"/>
</dbReference>
<dbReference type="InterPro" id="IPR006073">
    <property type="entry name" value="GTP-bd"/>
</dbReference>
<dbReference type="InterPro" id="IPR016484">
    <property type="entry name" value="GTPase_Der"/>
</dbReference>
<dbReference type="InterPro" id="IPR032859">
    <property type="entry name" value="KH_dom-like"/>
</dbReference>
<dbReference type="InterPro" id="IPR015946">
    <property type="entry name" value="KH_dom-like_a/b"/>
</dbReference>
<dbReference type="InterPro" id="IPR027417">
    <property type="entry name" value="P-loop_NTPase"/>
</dbReference>
<dbReference type="InterPro" id="IPR005225">
    <property type="entry name" value="Small_GTP-bd"/>
</dbReference>
<dbReference type="NCBIfam" id="TIGR03594">
    <property type="entry name" value="GTPase_EngA"/>
    <property type="match status" value="1"/>
</dbReference>
<dbReference type="NCBIfam" id="TIGR00231">
    <property type="entry name" value="small_GTP"/>
    <property type="match status" value="2"/>
</dbReference>
<dbReference type="PANTHER" id="PTHR43834">
    <property type="entry name" value="GTPASE DER"/>
    <property type="match status" value="1"/>
</dbReference>
<dbReference type="PANTHER" id="PTHR43834:SF6">
    <property type="entry name" value="GTPASE DER"/>
    <property type="match status" value="1"/>
</dbReference>
<dbReference type="Pfam" id="PF14714">
    <property type="entry name" value="KH_dom-like"/>
    <property type="match status" value="1"/>
</dbReference>
<dbReference type="Pfam" id="PF01926">
    <property type="entry name" value="MMR_HSR1"/>
    <property type="match status" value="2"/>
</dbReference>
<dbReference type="PIRSF" id="PIRSF006485">
    <property type="entry name" value="GTP-binding_EngA"/>
    <property type="match status" value="1"/>
</dbReference>
<dbReference type="PRINTS" id="PR00326">
    <property type="entry name" value="GTP1OBG"/>
</dbReference>
<dbReference type="SUPFAM" id="SSF52540">
    <property type="entry name" value="P-loop containing nucleoside triphosphate hydrolases"/>
    <property type="match status" value="2"/>
</dbReference>
<dbReference type="PROSITE" id="PS51712">
    <property type="entry name" value="G_ENGA"/>
    <property type="match status" value="2"/>
</dbReference>
<organism>
    <name type="scientific">Geobacter sp. (strain M21)</name>
    <dbReference type="NCBI Taxonomy" id="443144"/>
    <lineage>
        <taxon>Bacteria</taxon>
        <taxon>Pseudomonadati</taxon>
        <taxon>Thermodesulfobacteriota</taxon>
        <taxon>Desulfuromonadia</taxon>
        <taxon>Geobacterales</taxon>
        <taxon>Geobacteraceae</taxon>
        <taxon>Geobacter</taxon>
    </lineage>
</organism>
<comment type="function">
    <text evidence="1">GTPase that plays an essential role in the late steps of ribosome biogenesis.</text>
</comment>
<comment type="subunit">
    <text evidence="1">Associates with the 50S ribosomal subunit.</text>
</comment>
<comment type="similarity">
    <text evidence="1">Belongs to the TRAFAC class TrmE-Era-EngA-EngB-Septin-like GTPase superfamily. EngA (Der) GTPase family.</text>
</comment>